<gene>
    <name evidence="6" type="primary">MSRB1</name>
    <name evidence="10" type="ordered locus">Os06g0472000</name>
    <name evidence="7" type="ordered locus">LOC_Os06g27760</name>
    <name evidence="11" type="ORF">OsJ_21331</name>
    <name evidence="9" type="ORF">P0613F06.49-1</name>
</gene>
<name>MSRB1_ORYSJ</name>
<reference key="1">
    <citation type="journal article" date="2005" name="Nature">
        <title>The map-based sequence of the rice genome.</title>
        <authorList>
            <consortium name="International rice genome sequencing project (IRGSP)"/>
        </authorList>
    </citation>
    <scope>NUCLEOTIDE SEQUENCE [LARGE SCALE GENOMIC DNA]</scope>
    <source>
        <strain>cv. Nipponbare</strain>
    </source>
</reference>
<reference key="2">
    <citation type="journal article" date="2008" name="Nucleic Acids Res.">
        <title>The rice annotation project database (RAP-DB): 2008 update.</title>
        <authorList>
            <consortium name="The rice annotation project (RAP)"/>
        </authorList>
    </citation>
    <scope>GENOME REANNOTATION</scope>
    <source>
        <strain>cv. Nipponbare</strain>
    </source>
</reference>
<reference key="3">
    <citation type="journal article" date="2013" name="Rice">
        <title>Improvement of the Oryza sativa Nipponbare reference genome using next generation sequence and optical map data.</title>
        <authorList>
            <person name="Kawahara Y."/>
            <person name="de la Bastide M."/>
            <person name="Hamilton J.P."/>
            <person name="Kanamori H."/>
            <person name="McCombie W.R."/>
            <person name="Ouyang S."/>
            <person name="Schwartz D.C."/>
            <person name="Tanaka T."/>
            <person name="Wu J."/>
            <person name="Zhou S."/>
            <person name="Childs K.L."/>
            <person name="Davidson R.M."/>
            <person name="Lin H."/>
            <person name="Quesada-Ocampo L."/>
            <person name="Vaillancourt B."/>
            <person name="Sakai H."/>
            <person name="Lee S.S."/>
            <person name="Kim J."/>
            <person name="Numa H."/>
            <person name="Itoh T."/>
            <person name="Buell C.R."/>
            <person name="Matsumoto T."/>
        </authorList>
    </citation>
    <scope>GENOME REANNOTATION</scope>
    <source>
        <strain>cv. Nipponbare</strain>
    </source>
</reference>
<reference key="4">
    <citation type="journal article" date="2005" name="PLoS Biol.">
        <title>The genomes of Oryza sativa: a history of duplications.</title>
        <authorList>
            <person name="Yu J."/>
            <person name="Wang J."/>
            <person name="Lin W."/>
            <person name="Li S."/>
            <person name="Li H."/>
            <person name="Zhou J."/>
            <person name="Ni P."/>
            <person name="Dong W."/>
            <person name="Hu S."/>
            <person name="Zeng C."/>
            <person name="Zhang J."/>
            <person name="Zhang Y."/>
            <person name="Li R."/>
            <person name="Xu Z."/>
            <person name="Li S."/>
            <person name="Li X."/>
            <person name="Zheng H."/>
            <person name="Cong L."/>
            <person name="Lin L."/>
            <person name="Yin J."/>
            <person name="Geng J."/>
            <person name="Li G."/>
            <person name="Shi J."/>
            <person name="Liu J."/>
            <person name="Lv H."/>
            <person name="Li J."/>
            <person name="Wang J."/>
            <person name="Deng Y."/>
            <person name="Ran L."/>
            <person name="Shi X."/>
            <person name="Wang X."/>
            <person name="Wu Q."/>
            <person name="Li C."/>
            <person name="Ren X."/>
            <person name="Wang J."/>
            <person name="Wang X."/>
            <person name="Li D."/>
            <person name="Liu D."/>
            <person name="Zhang X."/>
            <person name="Ji Z."/>
            <person name="Zhao W."/>
            <person name="Sun Y."/>
            <person name="Zhang Z."/>
            <person name="Bao J."/>
            <person name="Han Y."/>
            <person name="Dong L."/>
            <person name="Ji J."/>
            <person name="Chen P."/>
            <person name="Wu S."/>
            <person name="Liu J."/>
            <person name="Xiao Y."/>
            <person name="Bu D."/>
            <person name="Tan J."/>
            <person name="Yang L."/>
            <person name="Ye C."/>
            <person name="Zhang J."/>
            <person name="Xu J."/>
            <person name="Zhou Y."/>
            <person name="Yu Y."/>
            <person name="Zhang B."/>
            <person name="Zhuang S."/>
            <person name="Wei H."/>
            <person name="Liu B."/>
            <person name="Lei M."/>
            <person name="Yu H."/>
            <person name="Li Y."/>
            <person name="Xu H."/>
            <person name="Wei S."/>
            <person name="He X."/>
            <person name="Fang L."/>
            <person name="Zhang Z."/>
            <person name="Zhang Y."/>
            <person name="Huang X."/>
            <person name="Su Z."/>
            <person name="Tong W."/>
            <person name="Li J."/>
            <person name="Tong Z."/>
            <person name="Li S."/>
            <person name="Ye J."/>
            <person name="Wang L."/>
            <person name="Fang L."/>
            <person name="Lei T."/>
            <person name="Chen C.-S."/>
            <person name="Chen H.-C."/>
            <person name="Xu Z."/>
            <person name="Li H."/>
            <person name="Huang H."/>
            <person name="Zhang F."/>
            <person name="Xu H."/>
            <person name="Li N."/>
            <person name="Zhao C."/>
            <person name="Li S."/>
            <person name="Dong L."/>
            <person name="Huang Y."/>
            <person name="Li L."/>
            <person name="Xi Y."/>
            <person name="Qi Q."/>
            <person name="Li W."/>
            <person name="Zhang B."/>
            <person name="Hu W."/>
            <person name="Zhang Y."/>
            <person name="Tian X."/>
            <person name="Jiao Y."/>
            <person name="Liang X."/>
            <person name="Jin J."/>
            <person name="Gao L."/>
            <person name="Zheng W."/>
            <person name="Hao B."/>
            <person name="Liu S.-M."/>
            <person name="Wang W."/>
            <person name="Yuan L."/>
            <person name="Cao M."/>
            <person name="McDermott J."/>
            <person name="Samudrala R."/>
            <person name="Wang J."/>
            <person name="Wong G.K.-S."/>
            <person name="Yang H."/>
        </authorList>
    </citation>
    <scope>NUCLEOTIDE SEQUENCE [LARGE SCALE GENOMIC DNA]</scope>
    <source>
        <strain>cv. Nipponbare</strain>
    </source>
</reference>
<reference key="5">
    <citation type="journal article" date="2003" name="Science">
        <title>Collection, mapping, and annotation of over 28,000 cDNA clones from japonica rice.</title>
        <authorList>
            <consortium name="The rice full-length cDNA consortium"/>
        </authorList>
    </citation>
    <scope>NUCLEOTIDE SEQUENCE [LARGE SCALE MRNA] OF 3-214</scope>
    <source>
        <strain>cv. Nipponbare</strain>
    </source>
</reference>
<reference key="6">
    <citation type="journal article" date="2006" name="Photosyn. Res.">
        <title>Plant methionine sulfoxide reductase A and B multigenic families.</title>
        <authorList>
            <person name="Rouhier N."/>
            <person name="Vieira Dos Santos C."/>
            <person name="Tarrago L."/>
            <person name="Rey P."/>
        </authorList>
    </citation>
    <scope>GENE FAMILY</scope>
    <scope>NOMENCLATURE</scope>
</reference>
<reference key="7">
    <citation type="journal article" date="2009" name="Planta">
        <title>OsMSRA4.1 and OsMSRB1.1, two rice plastidial methionine sulfoxide reductases, are involved in abiotic stress responses.</title>
        <authorList>
            <person name="Guo X."/>
            <person name="Wu Y."/>
            <person name="Wang Y."/>
            <person name="Chen Y."/>
            <person name="Chu C."/>
        </authorList>
    </citation>
    <scope>FUNCTION</scope>
    <scope>CATALYTIC ACTIVITY</scope>
    <scope>SUBCELLULAR LOCATION</scope>
    <scope>TISSUE SPECIFICITY</scope>
    <scope>INDUCTION</scope>
</reference>
<evidence type="ECO:0000250" key="1">
    <source>
        <dbReference type="UniProtKB" id="P0A746"/>
    </source>
</evidence>
<evidence type="ECO:0000255" key="2"/>
<evidence type="ECO:0000255" key="3">
    <source>
        <dbReference type="PROSITE-ProRule" id="PRU01126"/>
    </source>
</evidence>
<evidence type="ECO:0000256" key="4">
    <source>
        <dbReference type="SAM" id="MobiDB-lite"/>
    </source>
</evidence>
<evidence type="ECO:0000269" key="5">
    <source>
    </source>
</evidence>
<evidence type="ECO:0000303" key="6">
    <source>
    </source>
</evidence>
<evidence type="ECO:0000305" key="7"/>
<evidence type="ECO:0000305" key="8">
    <source>
    </source>
</evidence>
<evidence type="ECO:0000312" key="9">
    <source>
        <dbReference type="EMBL" id="BAD35399.1"/>
    </source>
</evidence>
<evidence type="ECO:0000312" key="10">
    <source>
        <dbReference type="EMBL" id="BAF19534.1"/>
    </source>
</evidence>
<evidence type="ECO:0000312" key="11">
    <source>
        <dbReference type="EMBL" id="EEE65699.1"/>
    </source>
</evidence>
<accession>Q0DC89</accession>
<accession>Q69XS8</accession>
<sequence length="214" mass="23422">MAMRQYAAATAASSSFRARPRARPSCLPAAALPLAPCCGVAWSRASYRRASVRAMGAASSSSSSSSSSPSPQGQAQAQAQGKPNYSTSLTDEEWRKRLTKDQYYITRQKGTERAFTGEYWNTKTPGIYHCVCCDTPLFESSTKFDSGTGWPSYYQPIGDNVKCKLDMSIIFMPRTEVLCAVCDAHLGHVFDDGPRPTGKRYCINSASLKLKKTQ</sequence>
<organism>
    <name type="scientific">Oryza sativa subsp. japonica</name>
    <name type="common">Rice</name>
    <dbReference type="NCBI Taxonomy" id="39947"/>
    <lineage>
        <taxon>Eukaryota</taxon>
        <taxon>Viridiplantae</taxon>
        <taxon>Streptophyta</taxon>
        <taxon>Embryophyta</taxon>
        <taxon>Tracheophyta</taxon>
        <taxon>Spermatophyta</taxon>
        <taxon>Magnoliopsida</taxon>
        <taxon>Liliopsida</taxon>
        <taxon>Poales</taxon>
        <taxon>Poaceae</taxon>
        <taxon>BOP clade</taxon>
        <taxon>Oryzoideae</taxon>
        <taxon>Oryzeae</taxon>
        <taxon>Oryzinae</taxon>
        <taxon>Oryza</taxon>
        <taxon>Oryza sativa</taxon>
    </lineage>
</organism>
<proteinExistence type="evidence at protein level"/>
<keyword id="KW-0150">Chloroplast</keyword>
<keyword id="KW-0249">Electron transport</keyword>
<keyword id="KW-0479">Metal-binding</keyword>
<keyword id="KW-0560">Oxidoreductase</keyword>
<keyword id="KW-0934">Plastid</keyword>
<keyword id="KW-0676">Redox-active center</keyword>
<keyword id="KW-1185">Reference proteome</keyword>
<keyword id="KW-0809">Transit peptide</keyword>
<keyword id="KW-0813">Transport</keyword>
<keyword id="KW-0862">Zinc</keyword>
<dbReference type="EC" id="1.8.4.12" evidence="5"/>
<dbReference type="EMBL" id="AP003545">
    <property type="protein sequence ID" value="BAD35399.1"/>
    <property type="status" value="ALT_INIT"/>
    <property type="molecule type" value="Genomic_DNA"/>
</dbReference>
<dbReference type="EMBL" id="AP008212">
    <property type="protein sequence ID" value="BAF19534.1"/>
    <property type="status" value="ALT_INIT"/>
    <property type="molecule type" value="Genomic_DNA"/>
</dbReference>
<dbReference type="EMBL" id="AP014962">
    <property type="status" value="NOT_ANNOTATED_CDS"/>
    <property type="molecule type" value="Genomic_DNA"/>
</dbReference>
<dbReference type="EMBL" id="CM000143">
    <property type="protein sequence ID" value="EEE65699.1"/>
    <property type="status" value="ALT_INIT"/>
    <property type="molecule type" value="Genomic_DNA"/>
</dbReference>
<dbReference type="EMBL" id="AK063588">
    <property type="status" value="NOT_ANNOTATED_CDS"/>
    <property type="molecule type" value="mRNA"/>
</dbReference>
<dbReference type="RefSeq" id="XP_015644273.1">
    <property type="nucleotide sequence ID" value="XM_015788787.1"/>
</dbReference>
<dbReference type="SMR" id="Q0DC89"/>
<dbReference type="FunCoup" id="Q0DC89">
    <property type="interactions" value="1006"/>
</dbReference>
<dbReference type="STRING" id="39947.Q0DC89"/>
<dbReference type="PaxDb" id="39947-Q0DC89"/>
<dbReference type="EnsemblPlants" id="Os06t0472000-01">
    <property type="protein sequence ID" value="Os06t0472000-01"/>
    <property type="gene ID" value="Os06g0472000"/>
</dbReference>
<dbReference type="Gramene" id="Os06t0472000-01">
    <property type="protein sequence ID" value="Os06t0472000-01"/>
    <property type="gene ID" value="Os06g0472000"/>
</dbReference>
<dbReference type="KEGG" id="dosa:Os06g0472000"/>
<dbReference type="eggNOG" id="KOG0856">
    <property type="taxonomic scope" value="Eukaryota"/>
</dbReference>
<dbReference type="HOGENOM" id="CLU_031040_8_0_1"/>
<dbReference type="InParanoid" id="Q0DC89"/>
<dbReference type="OrthoDB" id="44061at2759"/>
<dbReference type="Proteomes" id="UP000000763">
    <property type="component" value="Chromosome 6"/>
</dbReference>
<dbReference type="Proteomes" id="UP000007752">
    <property type="component" value="Chromosome 6"/>
</dbReference>
<dbReference type="Proteomes" id="UP000059680">
    <property type="component" value="Chromosome 6"/>
</dbReference>
<dbReference type="GO" id="GO:0009507">
    <property type="term" value="C:chloroplast"/>
    <property type="evidence" value="ECO:0000314"/>
    <property type="project" value="UniProtKB"/>
</dbReference>
<dbReference type="GO" id="GO:0005737">
    <property type="term" value="C:cytoplasm"/>
    <property type="evidence" value="ECO:0000318"/>
    <property type="project" value="GO_Central"/>
</dbReference>
<dbReference type="GO" id="GO:0046872">
    <property type="term" value="F:metal ion binding"/>
    <property type="evidence" value="ECO:0007669"/>
    <property type="project" value="UniProtKB-KW"/>
</dbReference>
<dbReference type="GO" id="GO:0033743">
    <property type="term" value="F:peptide-methionine (R)-S-oxide reductase activity"/>
    <property type="evidence" value="ECO:0000314"/>
    <property type="project" value="UniProtKB"/>
</dbReference>
<dbReference type="GO" id="GO:0030091">
    <property type="term" value="P:protein repair"/>
    <property type="evidence" value="ECO:0007669"/>
    <property type="project" value="InterPro"/>
</dbReference>
<dbReference type="GO" id="GO:0006979">
    <property type="term" value="P:response to oxidative stress"/>
    <property type="evidence" value="ECO:0000314"/>
    <property type="project" value="UniProtKB"/>
</dbReference>
<dbReference type="FunFam" id="2.170.150.20:FF:000001">
    <property type="entry name" value="Peptide methionine sulfoxide reductase MsrB"/>
    <property type="match status" value="1"/>
</dbReference>
<dbReference type="Gene3D" id="2.170.150.20">
    <property type="entry name" value="Peptide methionine sulfoxide reductase"/>
    <property type="match status" value="1"/>
</dbReference>
<dbReference type="InterPro" id="IPR028427">
    <property type="entry name" value="Met_Sox_Rdtase_MsrB"/>
</dbReference>
<dbReference type="InterPro" id="IPR002579">
    <property type="entry name" value="Met_Sox_Rdtase_MsrB_dom"/>
</dbReference>
<dbReference type="InterPro" id="IPR011057">
    <property type="entry name" value="Mss4-like_sf"/>
</dbReference>
<dbReference type="NCBIfam" id="TIGR00357">
    <property type="entry name" value="peptide-methionine (R)-S-oxide reductase MsrB"/>
    <property type="match status" value="1"/>
</dbReference>
<dbReference type="PANTHER" id="PTHR10173">
    <property type="entry name" value="METHIONINE SULFOXIDE REDUCTASE"/>
    <property type="match status" value="1"/>
</dbReference>
<dbReference type="PANTHER" id="PTHR10173:SF52">
    <property type="entry name" value="METHIONINE-R-SULFOXIDE REDUCTASE B1"/>
    <property type="match status" value="1"/>
</dbReference>
<dbReference type="Pfam" id="PF01641">
    <property type="entry name" value="SelR"/>
    <property type="match status" value="1"/>
</dbReference>
<dbReference type="SUPFAM" id="SSF51316">
    <property type="entry name" value="Mss4-like"/>
    <property type="match status" value="1"/>
</dbReference>
<dbReference type="PROSITE" id="PS51790">
    <property type="entry name" value="MSRB"/>
    <property type="match status" value="1"/>
</dbReference>
<feature type="transit peptide" description="Chloroplast" evidence="2">
    <location>
        <begin position="1"/>
        <end position="53"/>
    </location>
</feature>
<feature type="chain" id="PRO_0000395528" description="Peptide methionine sulfoxide reductase B1, chloroplastic">
    <location>
        <begin position="54"/>
        <end position="214"/>
    </location>
</feature>
<feature type="domain" description="MsrB" evidence="3">
    <location>
        <begin position="91"/>
        <end position="213"/>
    </location>
</feature>
<feature type="region of interest" description="Disordered" evidence="4">
    <location>
        <begin position="58"/>
        <end position="91"/>
    </location>
</feature>
<feature type="compositionally biased region" description="Low complexity" evidence="4">
    <location>
        <begin position="58"/>
        <end position="81"/>
    </location>
</feature>
<feature type="active site" description="Nucleophile" evidence="3">
    <location>
        <position position="202"/>
    </location>
</feature>
<feature type="binding site" evidence="3">
    <location>
        <position position="130"/>
    </location>
    <ligand>
        <name>Zn(2+)</name>
        <dbReference type="ChEBI" id="CHEBI:29105"/>
    </ligand>
</feature>
<feature type="binding site" evidence="3">
    <location>
        <position position="133"/>
    </location>
    <ligand>
        <name>Zn(2+)</name>
        <dbReference type="ChEBI" id="CHEBI:29105"/>
    </ligand>
</feature>
<feature type="binding site" evidence="3">
    <location>
        <position position="179"/>
    </location>
    <ligand>
        <name>Zn(2+)</name>
        <dbReference type="ChEBI" id="CHEBI:29105"/>
    </ligand>
</feature>
<feature type="binding site" evidence="3">
    <location>
        <position position="182"/>
    </location>
    <ligand>
        <name>Zn(2+)</name>
        <dbReference type="ChEBI" id="CHEBI:29105"/>
    </ligand>
</feature>
<comment type="function">
    <text evidence="5">Catalyzes the reduction of methionine sulfoxide (MetSO) to methionine in proteins. Involved in abiotic stress response. Plays a protective role against oxidative stress by restoring activity to proteins that have been inactivated by methionine oxidation. MSRB family specifically reduces the MetSO R-enantiomer.</text>
</comment>
<comment type="catalytic activity">
    <reaction evidence="5">
        <text>L-methionyl-[protein] + [thioredoxin]-disulfide + H2O = L-methionyl-(R)-S-oxide-[protein] + [thioredoxin]-dithiol</text>
        <dbReference type="Rhea" id="RHEA:24164"/>
        <dbReference type="Rhea" id="RHEA-COMP:10698"/>
        <dbReference type="Rhea" id="RHEA-COMP:10700"/>
        <dbReference type="Rhea" id="RHEA-COMP:12313"/>
        <dbReference type="Rhea" id="RHEA-COMP:12314"/>
        <dbReference type="ChEBI" id="CHEBI:15377"/>
        <dbReference type="ChEBI" id="CHEBI:16044"/>
        <dbReference type="ChEBI" id="CHEBI:29950"/>
        <dbReference type="ChEBI" id="CHEBI:45764"/>
        <dbReference type="ChEBI" id="CHEBI:50058"/>
        <dbReference type="EC" id="1.8.4.12"/>
    </reaction>
</comment>
<comment type="cofactor">
    <cofactor evidence="1">
        <name>Zn(2+)</name>
        <dbReference type="ChEBI" id="CHEBI:29105"/>
    </cofactor>
    <text evidence="1">Binds 1 zinc ion per subunit.</text>
</comment>
<comment type="subcellular location">
    <subcellularLocation>
        <location evidence="5">Plastid</location>
        <location evidence="5">Chloroplast</location>
    </subcellularLocation>
</comment>
<comment type="tissue specificity">
    <text evidence="5">Expressed in leaves and flowers.</text>
</comment>
<comment type="induction">
    <text evidence="5">By salt, mannitol, cold, methyl viologen and abscisic acid (ABA).</text>
</comment>
<comment type="miscellaneous">
    <text evidence="8">Lacks the conserved cysteine (here Thr-148) required for the reduction by thioredoxins (TRX) through a dithiol-disulfide exchange involving both redox-active Cys of TRX and MSRB. The reduction mechanism may occur through sulfenic acid formation on the catalytic cysteine (Cys-202).</text>
</comment>
<comment type="similarity">
    <text evidence="7">Belongs to the MsrB Met sulfoxide reductase family.</text>
</comment>
<comment type="sequence caution" evidence="7">
    <conflict type="erroneous initiation">
        <sequence resource="EMBL-CDS" id="BAD35399"/>
    </conflict>
    <text>Truncated N-terminus.</text>
</comment>
<comment type="sequence caution" evidence="7">
    <conflict type="erroneous initiation">
        <sequence resource="EMBL-CDS" id="BAF19534"/>
    </conflict>
    <text>Truncated N-terminus.</text>
</comment>
<comment type="sequence caution" evidence="7">
    <conflict type="erroneous initiation">
        <sequence resource="EMBL-CDS" id="EEE65699"/>
    </conflict>
    <text>Truncated N-terminus.</text>
</comment>
<protein>
    <recommendedName>
        <fullName evidence="7">Peptide methionine sulfoxide reductase B1, chloroplastic</fullName>
        <shortName evidence="6">OsMSRB1</shortName>
        <ecNumber evidence="5">1.8.4.12</ecNumber>
    </recommendedName>
    <alternativeName>
        <fullName evidence="7">Peptide-methionine (R)-S-oxide reductase</fullName>
    </alternativeName>
</protein>